<feature type="chain" id="PRO_0000290857" description="Small ribosomal subunit protein uS8">
    <location>
        <begin position="1"/>
        <end position="132"/>
    </location>
</feature>
<comment type="function">
    <text evidence="1">One of the primary rRNA binding proteins, it binds directly to 16S rRNA central domain where it helps coordinate assembly of the platform of the 30S subunit.</text>
</comment>
<comment type="subunit">
    <text evidence="1">Part of the 30S ribosomal subunit. Contacts proteins S5 and S12.</text>
</comment>
<comment type="similarity">
    <text evidence="1">Belongs to the universal ribosomal protein uS8 family.</text>
</comment>
<reference key="1">
    <citation type="journal article" date="2006" name="Proc. Natl. Acad. Sci. U.S.A.">
        <title>Comparative genomics of the lactic acid bacteria.</title>
        <authorList>
            <person name="Makarova K.S."/>
            <person name="Slesarev A."/>
            <person name="Wolf Y.I."/>
            <person name="Sorokin A."/>
            <person name="Mirkin B."/>
            <person name="Koonin E.V."/>
            <person name="Pavlov A."/>
            <person name="Pavlova N."/>
            <person name="Karamychev V."/>
            <person name="Polouchine N."/>
            <person name="Shakhova V."/>
            <person name="Grigoriev I."/>
            <person name="Lou Y."/>
            <person name="Rohksar D."/>
            <person name="Lucas S."/>
            <person name="Huang K."/>
            <person name="Goodstein D.M."/>
            <person name="Hawkins T."/>
            <person name="Plengvidhya V."/>
            <person name="Welker D."/>
            <person name="Hughes J."/>
            <person name="Goh Y."/>
            <person name="Benson A."/>
            <person name="Baldwin K."/>
            <person name="Lee J.-H."/>
            <person name="Diaz-Muniz I."/>
            <person name="Dosti B."/>
            <person name="Smeianov V."/>
            <person name="Wechter W."/>
            <person name="Barabote R."/>
            <person name="Lorca G."/>
            <person name="Altermann E."/>
            <person name="Barrangou R."/>
            <person name="Ganesan B."/>
            <person name="Xie Y."/>
            <person name="Rawsthorne H."/>
            <person name="Tamir D."/>
            <person name="Parker C."/>
            <person name="Breidt F."/>
            <person name="Broadbent J.R."/>
            <person name="Hutkins R."/>
            <person name="O'Sullivan D."/>
            <person name="Steele J."/>
            <person name="Unlu G."/>
            <person name="Saier M.H. Jr."/>
            <person name="Klaenhammer T."/>
            <person name="Richardson P."/>
            <person name="Kozyavkin S."/>
            <person name="Weimer B.C."/>
            <person name="Mills D.A."/>
        </authorList>
    </citation>
    <scope>NUCLEOTIDE SEQUENCE [LARGE SCALE GENOMIC DNA]</scope>
    <source>
        <strain>ATCC BAA-365 / Lb-18</strain>
    </source>
</reference>
<name>RS8_LACDB</name>
<proteinExistence type="inferred from homology"/>
<gene>
    <name evidence="1" type="primary">rpsH</name>
    <name type="ordered locus">LBUL_0364</name>
</gene>
<accession>Q04C01</accession>
<evidence type="ECO:0000255" key="1">
    <source>
        <dbReference type="HAMAP-Rule" id="MF_01302"/>
    </source>
</evidence>
<evidence type="ECO:0000305" key="2"/>
<organism>
    <name type="scientific">Lactobacillus delbrueckii subsp. bulgaricus (strain ATCC BAA-365 / Lb-18)</name>
    <dbReference type="NCBI Taxonomy" id="321956"/>
    <lineage>
        <taxon>Bacteria</taxon>
        <taxon>Bacillati</taxon>
        <taxon>Bacillota</taxon>
        <taxon>Bacilli</taxon>
        <taxon>Lactobacillales</taxon>
        <taxon>Lactobacillaceae</taxon>
        <taxon>Lactobacillus</taxon>
    </lineage>
</organism>
<dbReference type="EMBL" id="CP000412">
    <property type="protein sequence ID" value="ABJ58021.1"/>
    <property type="molecule type" value="Genomic_DNA"/>
</dbReference>
<dbReference type="RefSeq" id="WP_002878190.1">
    <property type="nucleotide sequence ID" value="NC_008529.1"/>
</dbReference>
<dbReference type="SMR" id="Q04C01"/>
<dbReference type="GeneID" id="69668440"/>
<dbReference type="KEGG" id="lbu:LBUL_0364"/>
<dbReference type="HOGENOM" id="CLU_098428_0_2_9"/>
<dbReference type="BioCyc" id="LDEL321956:LBUL_RS01700-MONOMER"/>
<dbReference type="GO" id="GO:1990904">
    <property type="term" value="C:ribonucleoprotein complex"/>
    <property type="evidence" value="ECO:0007669"/>
    <property type="project" value="UniProtKB-KW"/>
</dbReference>
<dbReference type="GO" id="GO:0005840">
    <property type="term" value="C:ribosome"/>
    <property type="evidence" value="ECO:0007669"/>
    <property type="project" value="UniProtKB-KW"/>
</dbReference>
<dbReference type="GO" id="GO:0019843">
    <property type="term" value="F:rRNA binding"/>
    <property type="evidence" value="ECO:0007669"/>
    <property type="project" value="UniProtKB-UniRule"/>
</dbReference>
<dbReference type="GO" id="GO:0003735">
    <property type="term" value="F:structural constituent of ribosome"/>
    <property type="evidence" value="ECO:0007669"/>
    <property type="project" value="InterPro"/>
</dbReference>
<dbReference type="GO" id="GO:0006412">
    <property type="term" value="P:translation"/>
    <property type="evidence" value="ECO:0007669"/>
    <property type="project" value="UniProtKB-UniRule"/>
</dbReference>
<dbReference type="FunFam" id="3.30.1370.30:FF:000002">
    <property type="entry name" value="30S ribosomal protein S8"/>
    <property type="match status" value="1"/>
</dbReference>
<dbReference type="FunFam" id="3.30.1490.10:FF:000001">
    <property type="entry name" value="30S ribosomal protein S8"/>
    <property type="match status" value="1"/>
</dbReference>
<dbReference type="Gene3D" id="3.30.1370.30">
    <property type="match status" value="1"/>
</dbReference>
<dbReference type="Gene3D" id="3.30.1490.10">
    <property type="match status" value="1"/>
</dbReference>
<dbReference type="HAMAP" id="MF_01302_B">
    <property type="entry name" value="Ribosomal_uS8_B"/>
    <property type="match status" value="1"/>
</dbReference>
<dbReference type="InterPro" id="IPR000630">
    <property type="entry name" value="Ribosomal_uS8"/>
</dbReference>
<dbReference type="InterPro" id="IPR047863">
    <property type="entry name" value="Ribosomal_uS8_CS"/>
</dbReference>
<dbReference type="InterPro" id="IPR035987">
    <property type="entry name" value="Ribosomal_uS8_sf"/>
</dbReference>
<dbReference type="NCBIfam" id="NF001109">
    <property type="entry name" value="PRK00136.1"/>
    <property type="match status" value="1"/>
</dbReference>
<dbReference type="PANTHER" id="PTHR11758">
    <property type="entry name" value="40S RIBOSOMAL PROTEIN S15A"/>
    <property type="match status" value="1"/>
</dbReference>
<dbReference type="Pfam" id="PF00410">
    <property type="entry name" value="Ribosomal_S8"/>
    <property type="match status" value="1"/>
</dbReference>
<dbReference type="SUPFAM" id="SSF56047">
    <property type="entry name" value="Ribosomal protein S8"/>
    <property type="match status" value="1"/>
</dbReference>
<dbReference type="PROSITE" id="PS00053">
    <property type="entry name" value="RIBOSOMAL_S8"/>
    <property type="match status" value="1"/>
</dbReference>
<keyword id="KW-0687">Ribonucleoprotein</keyword>
<keyword id="KW-0689">Ribosomal protein</keyword>
<keyword id="KW-0694">RNA-binding</keyword>
<keyword id="KW-0699">rRNA-binding</keyword>
<sequence>MVLTDPIADFLTRIRNANMAKHDSVEIPASNIKKSLTEILKQEGFIRDYEVTEDGKQGVIKITLKYGPNGERVISGLKRISKPGLRNYVSADNLPKVLNGLGIAIVSTSAGILTDKEAREKNVGGEVIAYVW</sequence>
<protein>
    <recommendedName>
        <fullName evidence="1">Small ribosomal subunit protein uS8</fullName>
    </recommendedName>
    <alternativeName>
        <fullName evidence="2">30S ribosomal protein S8</fullName>
    </alternativeName>
</protein>